<reference key="1">
    <citation type="journal article" date="1997" name="Microbiology">
        <title>The Bacillus subtilis L-arabinose (ara) operon: nucleotide sequence, genetic organization and expression.</title>
        <authorList>
            <person name="Sa-Nogueira I.M.G."/>
            <person name="Nogueira T.V."/>
            <person name="Soares S."/>
            <person name="de Lencastre H."/>
        </authorList>
    </citation>
    <scope>NUCLEOTIDE SEQUENCE [GENOMIC DNA]</scope>
    <source>
        <strain>168</strain>
    </source>
</reference>
<reference key="2">
    <citation type="journal article" date="1996" name="Microbiology">
        <title>The dnaB-pheA (256 degrees-240 degrees) region of the Bacillus subtilis chromosome containing genes responsible for stress responses, the utilization of plant cell walls and primary metabolism.</title>
        <authorList>
            <person name="Wipat A."/>
            <person name="Carter N."/>
            <person name="Brignell C.S."/>
            <person name="Guy J.B."/>
            <person name="Piper K."/>
            <person name="Sanders J."/>
            <person name="Emmerson P.T."/>
            <person name="Harwood C.R."/>
        </authorList>
    </citation>
    <scope>NUCLEOTIDE SEQUENCE [GENOMIC DNA]</scope>
    <source>
        <strain>168</strain>
    </source>
</reference>
<reference key="3">
    <citation type="journal article" date="1997" name="Nature">
        <title>The complete genome sequence of the Gram-positive bacterium Bacillus subtilis.</title>
        <authorList>
            <person name="Kunst F."/>
            <person name="Ogasawara N."/>
            <person name="Moszer I."/>
            <person name="Albertini A.M."/>
            <person name="Alloni G."/>
            <person name="Azevedo V."/>
            <person name="Bertero M.G."/>
            <person name="Bessieres P."/>
            <person name="Bolotin A."/>
            <person name="Borchert S."/>
            <person name="Borriss R."/>
            <person name="Boursier L."/>
            <person name="Brans A."/>
            <person name="Braun M."/>
            <person name="Brignell S.C."/>
            <person name="Bron S."/>
            <person name="Brouillet S."/>
            <person name="Bruschi C.V."/>
            <person name="Caldwell B."/>
            <person name="Capuano V."/>
            <person name="Carter N.M."/>
            <person name="Choi S.-K."/>
            <person name="Codani J.-J."/>
            <person name="Connerton I.F."/>
            <person name="Cummings N.J."/>
            <person name="Daniel R.A."/>
            <person name="Denizot F."/>
            <person name="Devine K.M."/>
            <person name="Duesterhoeft A."/>
            <person name="Ehrlich S.D."/>
            <person name="Emmerson P.T."/>
            <person name="Entian K.-D."/>
            <person name="Errington J."/>
            <person name="Fabret C."/>
            <person name="Ferrari E."/>
            <person name="Foulger D."/>
            <person name="Fritz C."/>
            <person name="Fujita M."/>
            <person name="Fujita Y."/>
            <person name="Fuma S."/>
            <person name="Galizzi A."/>
            <person name="Galleron N."/>
            <person name="Ghim S.-Y."/>
            <person name="Glaser P."/>
            <person name="Goffeau A."/>
            <person name="Golightly E.J."/>
            <person name="Grandi G."/>
            <person name="Guiseppi G."/>
            <person name="Guy B.J."/>
            <person name="Haga K."/>
            <person name="Haiech J."/>
            <person name="Harwood C.R."/>
            <person name="Henaut A."/>
            <person name="Hilbert H."/>
            <person name="Holsappel S."/>
            <person name="Hosono S."/>
            <person name="Hullo M.-F."/>
            <person name="Itaya M."/>
            <person name="Jones L.-M."/>
            <person name="Joris B."/>
            <person name="Karamata D."/>
            <person name="Kasahara Y."/>
            <person name="Klaerr-Blanchard M."/>
            <person name="Klein C."/>
            <person name="Kobayashi Y."/>
            <person name="Koetter P."/>
            <person name="Koningstein G."/>
            <person name="Krogh S."/>
            <person name="Kumano M."/>
            <person name="Kurita K."/>
            <person name="Lapidus A."/>
            <person name="Lardinois S."/>
            <person name="Lauber J."/>
            <person name="Lazarevic V."/>
            <person name="Lee S.-M."/>
            <person name="Levine A."/>
            <person name="Liu H."/>
            <person name="Masuda S."/>
            <person name="Mauel C."/>
            <person name="Medigue C."/>
            <person name="Medina N."/>
            <person name="Mellado R.P."/>
            <person name="Mizuno M."/>
            <person name="Moestl D."/>
            <person name="Nakai S."/>
            <person name="Noback M."/>
            <person name="Noone D."/>
            <person name="O'Reilly M."/>
            <person name="Ogawa K."/>
            <person name="Ogiwara A."/>
            <person name="Oudega B."/>
            <person name="Park S.-H."/>
            <person name="Parro V."/>
            <person name="Pohl T.M."/>
            <person name="Portetelle D."/>
            <person name="Porwollik S."/>
            <person name="Prescott A.M."/>
            <person name="Presecan E."/>
            <person name="Pujic P."/>
            <person name="Purnelle B."/>
            <person name="Rapoport G."/>
            <person name="Rey M."/>
            <person name="Reynolds S."/>
            <person name="Rieger M."/>
            <person name="Rivolta C."/>
            <person name="Rocha E."/>
            <person name="Roche B."/>
            <person name="Rose M."/>
            <person name="Sadaie Y."/>
            <person name="Sato T."/>
            <person name="Scanlan E."/>
            <person name="Schleich S."/>
            <person name="Schroeter R."/>
            <person name="Scoffone F."/>
            <person name="Sekiguchi J."/>
            <person name="Sekowska A."/>
            <person name="Seror S.J."/>
            <person name="Serror P."/>
            <person name="Shin B.-S."/>
            <person name="Soldo B."/>
            <person name="Sorokin A."/>
            <person name="Tacconi E."/>
            <person name="Takagi T."/>
            <person name="Takahashi H."/>
            <person name="Takemaru K."/>
            <person name="Takeuchi M."/>
            <person name="Tamakoshi A."/>
            <person name="Tanaka T."/>
            <person name="Terpstra P."/>
            <person name="Tognoni A."/>
            <person name="Tosato V."/>
            <person name="Uchiyama S."/>
            <person name="Vandenbol M."/>
            <person name="Vannier F."/>
            <person name="Vassarotti A."/>
            <person name="Viari A."/>
            <person name="Wambutt R."/>
            <person name="Wedler E."/>
            <person name="Wedler H."/>
            <person name="Weitzenegger T."/>
            <person name="Winters P."/>
            <person name="Wipat A."/>
            <person name="Yamamoto H."/>
            <person name="Yamane K."/>
            <person name="Yasumoto K."/>
            <person name="Yata K."/>
            <person name="Yoshida K."/>
            <person name="Yoshikawa H.-F."/>
            <person name="Zumstein E."/>
            <person name="Yoshikawa H."/>
            <person name="Danchin A."/>
        </authorList>
    </citation>
    <scope>NUCLEOTIDE SEQUENCE [LARGE SCALE GENOMIC DNA]</scope>
    <source>
        <strain>168</strain>
    </source>
</reference>
<reference key="4">
    <citation type="journal article" date="2009" name="Microbiology">
        <title>From a consortium sequence to a unified sequence: the Bacillus subtilis 168 reference genome a decade later.</title>
        <authorList>
            <person name="Barbe V."/>
            <person name="Cruveiller S."/>
            <person name="Kunst F."/>
            <person name="Lenoble P."/>
            <person name="Meurice G."/>
            <person name="Sekowska A."/>
            <person name="Vallenet D."/>
            <person name="Wang T."/>
            <person name="Moszer I."/>
            <person name="Medigue C."/>
            <person name="Danchin A."/>
        </authorList>
    </citation>
    <scope>SEQUENCE REVISION TO 85-94</scope>
</reference>
<reference key="5">
    <citation type="journal article" date="1999" name="Mol. Microbiol.">
        <title>Mode of action of AraR, the key regulator of L-arabinose metabolism in Bacillus subtilis.</title>
        <authorList>
            <person name="Mota L.J."/>
            <person name="Tavares P."/>
            <person name="Sa-Nogueira I.M.G."/>
        </authorList>
    </citation>
    <scope>TRANSCRIPTIONAL REGULATION</scope>
</reference>
<feature type="chain" id="PRO_0000198382" description="L-arabinose isomerase">
    <location>
        <begin position="1"/>
        <end position="496"/>
    </location>
</feature>
<feature type="binding site" evidence="1">
    <location>
        <position position="305"/>
    </location>
    <ligand>
        <name>Mn(2+)</name>
        <dbReference type="ChEBI" id="CHEBI:29035"/>
    </ligand>
</feature>
<feature type="binding site" evidence="1">
    <location>
        <position position="330"/>
    </location>
    <ligand>
        <name>Mn(2+)</name>
        <dbReference type="ChEBI" id="CHEBI:29035"/>
    </ligand>
</feature>
<feature type="binding site" evidence="1">
    <location>
        <position position="347"/>
    </location>
    <ligand>
        <name>Mn(2+)</name>
        <dbReference type="ChEBI" id="CHEBI:29035"/>
    </ligand>
</feature>
<feature type="binding site" evidence="1">
    <location>
        <position position="446"/>
    </location>
    <ligand>
        <name>Mn(2+)</name>
        <dbReference type="ChEBI" id="CHEBI:29035"/>
    </ligand>
</feature>
<feature type="sequence conflict" description="In Ref. 2; CAA99587." evidence="3" ref="2">
    <original>AKMWIEGLSS</original>
    <variation>SQKLWKRRPFPP</variation>
    <location>
        <begin position="85"/>
        <end position="94"/>
    </location>
</feature>
<keyword id="KW-0054">Arabinose catabolism</keyword>
<keyword id="KW-0119">Carbohydrate metabolism</keyword>
<keyword id="KW-0413">Isomerase</keyword>
<keyword id="KW-0464">Manganese</keyword>
<keyword id="KW-0479">Metal-binding</keyword>
<keyword id="KW-1185">Reference proteome</keyword>
<protein>
    <recommendedName>
        <fullName evidence="1">L-arabinose isomerase</fullName>
        <ecNumber evidence="1">5.3.1.4</ecNumber>
    </recommendedName>
</protein>
<comment type="function">
    <text evidence="1">Catalyzes the conversion of L-arabinose to L-ribulose.</text>
</comment>
<comment type="catalytic activity">
    <reaction evidence="1">
        <text>beta-L-arabinopyranose = L-ribulose</text>
        <dbReference type="Rhea" id="RHEA:14821"/>
        <dbReference type="ChEBI" id="CHEBI:16880"/>
        <dbReference type="ChEBI" id="CHEBI:40886"/>
        <dbReference type="EC" id="5.3.1.4"/>
    </reaction>
</comment>
<comment type="cofactor">
    <cofactor evidence="1">
        <name>Mn(2+)</name>
        <dbReference type="ChEBI" id="CHEBI:29035"/>
    </cofactor>
    <text evidence="1">Binds 1 Mn(2+) ion per subunit.</text>
</comment>
<comment type="pathway">
    <text evidence="1">Carbohydrate degradation; L-arabinose degradation via L-ribulose; D-xylulose 5-phosphate from L-arabinose (bacterial route): step 1/3.</text>
</comment>
<comment type="induction">
    <text evidence="2">Transcription is repressed by glucose and by the binding of AraR to the operon promoter. L-arabinose acts as an inducer by inhibiting the binding of AraR to the DNA, thus allowing expression of the gene.</text>
</comment>
<comment type="similarity">
    <text evidence="1">Belongs to the arabinose isomerase family.</text>
</comment>
<proteinExistence type="evidence at transcript level"/>
<accession>P94523</accession>
<accession>O05184</accession>
<evidence type="ECO:0000255" key="1">
    <source>
        <dbReference type="HAMAP-Rule" id="MF_00519"/>
    </source>
</evidence>
<evidence type="ECO:0000269" key="2">
    <source>
    </source>
</evidence>
<evidence type="ECO:0000305" key="3"/>
<name>ARAA_BACSU</name>
<sequence length="496" mass="56122">MLQTKDYEFWFVTGSQHLYGEETLELVDQHAKSICEGLSGISSRYKITHKPVVTSPETIRELLREAEYSETCAGIITWMHTFSPAKMWIEGLSSYQKPLMHLHTQYNRDIPWGTIDMDFMNSNQSAHGDREYGYINSRMGLSRKVIAGYWDDEEVKKEMSQWMDTAAALNESRHIKVARFGDNMRHVAVTDGDKVGAHIQFGWQVDGYGIGDLVEVMDRITDDEVDTLYAEYDRLYVISEETKRDEAKVASIKEQAKIELGLTAFLEQGGYTAFTTSFEVLHGMKQLPGLAVQRLMEKGYGFAGEGDWKTAALVRMMKIMAKGKRTSFMEDYTYHFEPGNEMILGSHMLEVCPTVALDQPKIEVHSLSIGGKEDPARLVFNGISGSAIQASIVDIGGRFRLVLNEVNGQEIEKDMPNLPVARVLWKPEPSLKTAAEAWILAGGAHHTCLSYELTAEQMLDWAEMAGIESVLISRDTTIHKLKHELKWNEALYRLQK</sequence>
<gene>
    <name evidence="1" type="primary">araA</name>
    <name type="ordered locus">BSU28800</name>
</gene>
<dbReference type="EC" id="5.3.1.4" evidence="1"/>
<dbReference type="EMBL" id="X89408">
    <property type="protein sequence ID" value="CAA61585.1"/>
    <property type="molecule type" value="Genomic_DNA"/>
</dbReference>
<dbReference type="EMBL" id="Z75208">
    <property type="protein sequence ID" value="CAA99587.1"/>
    <property type="molecule type" value="Genomic_DNA"/>
</dbReference>
<dbReference type="EMBL" id="AL009126">
    <property type="protein sequence ID" value="CAB14840.2"/>
    <property type="molecule type" value="Genomic_DNA"/>
</dbReference>
<dbReference type="PIR" id="C69587">
    <property type="entry name" value="C69587"/>
</dbReference>
<dbReference type="RefSeq" id="NP_390758.2">
    <property type="nucleotide sequence ID" value="NC_000964.3"/>
</dbReference>
<dbReference type="RefSeq" id="WP_003229499.1">
    <property type="nucleotide sequence ID" value="NZ_OZ025638.1"/>
</dbReference>
<dbReference type="SMR" id="P94523"/>
<dbReference type="FunCoup" id="P94523">
    <property type="interactions" value="92"/>
</dbReference>
<dbReference type="STRING" id="224308.BSU28800"/>
<dbReference type="jPOST" id="P94523"/>
<dbReference type="PaxDb" id="224308-BSU28800"/>
<dbReference type="EnsemblBacteria" id="CAB14840">
    <property type="protein sequence ID" value="CAB14840"/>
    <property type="gene ID" value="BSU_28800"/>
</dbReference>
<dbReference type="GeneID" id="936764"/>
<dbReference type="KEGG" id="bsu:BSU28800"/>
<dbReference type="PATRIC" id="fig|224308.179.peg.3128"/>
<dbReference type="eggNOG" id="COG2160">
    <property type="taxonomic scope" value="Bacteria"/>
</dbReference>
<dbReference type="InParanoid" id="P94523"/>
<dbReference type="OrthoDB" id="9765600at2"/>
<dbReference type="PhylomeDB" id="P94523"/>
<dbReference type="BioCyc" id="BSUB:BSU28800-MONOMER"/>
<dbReference type="BRENDA" id="5.3.1.4">
    <property type="organism ID" value="658"/>
</dbReference>
<dbReference type="UniPathway" id="UPA00145">
    <property type="reaction ID" value="UER00565"/>
</dbReference>
<dbReference type="Proteomes" id="UP000001570">
    <property type="component" value="Chromosome"/>
</dbReference>
<dbReference type="GO" id="GO:0005829">
    <property type="term" value="C:cytosol"/>
    <property type="evidence" value="ECO:0000318"/>
    <property type="project" value="GO_Central"/>
</dbReference>
<dbReference type="GO" id="GO:0008733">
    <property type="term" value="F:L-arabinose isomerase activity"/>
    <property type="evidence" value="ECO:0000318"/>
    <property type="project" value="GO_Central"/>
</dbReference>
<dbReference type="GO" id="GO:0030145">
    <property type="term" value="F:manganese ion binding"/>
    <property type="evidence" value="ECO:0007669"/>
    <property type="project" value="UniProtKB-UniRule"/>
</dbReference>
<dbReference type="GO" id="GO:0019569">
    <property type="term" value="P:L-arabinose catabolic process to xylulose 5-phosphate"/>
    <property type="evidence" value="ECO:0000318"/>
    <property type="project" value="GO_Central"/>
</dbReference>
<dbReference type="CDD" id="cd03557">
    <property type="entry name" value="L-arabinose_isomerase"/>
    <property type="match status" value="1"/>
</dbReference>
<dbReference type="Gene3D" id="3.40.50.10940">
    <property type="match status" value="1"/>
</dbReference>
<dbReference type="HAMAP" id="MF_00519">
    <property type="entry name" value="Arabinose_Isome"/>
    <property type="match status" value="1"/>
</dbReference>
<dbReference type="InterPro" id="IPR024664">
    <property type="entry name" value="Ara_Isoase_C"/>
</dbReference>
<dbReference type="InterPro" id="IPR055390">
    <property type="entry name" value="AraA_central"/>
</dbReference>
<dbReference type="InterPro" id="IPR055389">
    <property type="entry name" value="AraA_N"/>
</dbReference>
<dbReference type="InterPro" id="IPR038583">
    <property type="entry name" value="AraA_N_sf"/>
</dbReference>
<dbReference type="InterPro" id="IPR004216">
    <property type="entry name" value="Fuc/Ara_isomerase_C"/>
</dbReference>
<dbReference type="InterPro" id="IPR009015">
    <property type="entry name" value="Fucose_isomerase_N/cen_sf"/>
</dbReference>
<dbReference type="InterPro" id="IPR003762">
    <property type="entry name" value="Lara_isomerase"/>
</dbReference>
<dbReference type="NCBIfam" id="NF002795">
    <property type="entry name" value="PRK02929.1"/>
    <property type="match status" value="1"/>
</dbReference>
<dbReference type="PANTHER" id="PTHR38464">
    <property type="entry name" value="L-ARABINOSE ISOMERASE"/>
    <property type="match status" value="1"/>
</dbReference>
<dbReference type="PANTHER" id="PTHR38464:SF1">
    <property type="entry name" value="L-ARABINOSE ISOMERASE"/>
    <property type="match status" value="1"/>
</dbReference>
<dbReference type="Pfam" id="PF24856">
    <property type="entry name" value="AraA_central"/>
    <property type="match status" value="1"/>
</dbReference>
<dbReference type="Pfam" id="PF02610">
    <property type="entry name" value="AraA_N"/>
    <property type="match status" value="1"/>
</dbReference>
<dbReference type="Pfam" id="PF11762">
    <property type="entry name" value="Arabinose_Iso_C"/>
    <property type="match status" value="1"/>
</dbReference>
<dbReference type="PIRSF" id="PIRSF001478">
    <property type="entry name" value="L-ara_isomerase"/>
    <property type="match status" value="1"/>
</dbReference>
<dbReference type="SUPFAM" id="SSF50443">
    <property type="entry name" value="FucI/AraA C-terminal domain-like"/>
    <property type="match status" value="1"/>
</dbReference>
<dbReference type="SUPFAM" id="SSF53743">
    <property type="entry name" value="FucI/AraA N-terminal and middle domains"/>
    <property type="match status" value="1"/>
</dbReference>
<organism>
    <name type="scientific">Bacillus subtilis (strain 168)</name>
    <dbReference type="NCBI Taxonomy" id="224308"/>
    <lineage>
        <taxon>Bacteria</taxon>
        <taxon>Bacillati</taxon>
        <taxon>Bacillota</taxon>
        <taxon>Bacilli</taxon>
        <taxon>Bacillales</taxon>
        <taxon>Bacillaceae</taxon>
        <taxon>Bacillus</taxon>
    </lineage>
</organism>